<protein>
    <recommendedName>
        <fullName evidence="1">2-C-methyl-D-erythritol 2,4-cyclodiphosphate synthase</fullName>
        <shortName evidence="1">MECDP-synthase</shortName>
        <shortName evidence="1">MECPP-synthase</shortName>
        <shortName evidence="1">MECPS</shortName>
        <ecNumber evidence="1">4.6.1.12</ecNumber>
    </recommendedName>
</protein>
<evidence type="ECO:0000255" key="1">
    <source>
        <dbReference type="HAMAP-Rule" id="MF_00107"/>
    </source>
</evidence>
<feature type="chain" id="PRO_1000022874" description="2-C-methyl-D-erythritol 2,4-cyclodiphosphate synthase">
    <location>
        <begin position="1"/>
        <end position="155"/>
    </location>
</feature>
<feature type="binding site" evidence="1">
    <location>
        <begin position="8"/>
        <end position="10"/>
    </location>
    <ligand>
        <name>4-CDP-2-C-methyl-D-erythritol 2-phosphate</name>
        <dbReference type="ChEBI" id="CHEBI:57919"/>
    </ligand>
</feature>
<feature type="binding site" evidence="1">
    <location>
        <position position="8"/>
    </location>
    <ligand>
        <name>a divalent metal cation</name>
        <dbReference type="ChEBI" id="CHEBI:60240"/>
    </ligand>
</feature>
<feature type="binding site" evidence="1">
    <location>
        <position position="10"/>
    </location>
    <ligand>
        <name>a divalent metal cation</name>
        <dbReference type="ChEBI" id="CHEBI:60240"/>
    </ligand>
</feature>
<feature type="binding site" evidence="1">
    <location>
        <begin position="34"/>
        <end position="35"/>
    </location>
    <ligand>
        <name>4-CDP-2-C-methyl-D-erythritol 2-phosphate</name>
        <dbReference type="ChEBI" id="CHEBI:57919"/>
    </ligand>
</feature>
<feature type="binding site" evidence="1">
    <location>
        <position position="42"/>
    </location>
    <ligand>
        <name>a divalent metal cation</name>
        <dbReference type="ChEBI" id="CHEBI:60240"/>
    </ligand>
</feature>
<feature type="binding site" evidence="1">
    <location>
        <begin position="56"/>
        <end position="58"/>
    </location>
    <ligand>
        <name>4-CDP-2-C-methyl-D-erythritol 2-phosphate</name>
        <dbReference type="ChEBI" id="CHEBI:57919"/>
    </ligand>
</feature>
<feature type="binding site" evidence="1">
    <location>
        <begin position="61"/>
        <end position="65"/>
    </location>
    <ligand>
        <name>4-CDP-2-C-methyl-D-erythritol 2-phosphate</name>
        <dbReference type="ChEBI" id="CHEBI:57919"/>
    </ligand>
</feature>
<feature type="binding site" evidence="1">
    <location>
        <begin position="100"/>
        <end position="106"/>
    </location>
    <ligand>
        <name>4-CDP-2-C-methyl-D-erythritol 2-phosphate</name>
        <dbReference type="ChEBI" id="CHEBI:57919"/>
    </ligand>
</feature>
<feature type="binding site" evidence="1">
    <location>
        <begin position="132"/>
        <end position="135"/>
    </location>
    <ligand>
        <name>4-CDP-2-C-methyl-D-erythritol 2-phosphate</name>
        <dbReference type="ChEBI" id="CHEBI:57919"/>
    </ligand>
</feature>
<feature type="binding site" evidence="1">
    <location>
        <position position="139"/>
    </location>
    <ligand>
        <name>4-CDP-2-C-methyl-D-erythritol 2-phosphate</name>
        <dbReference type="ChEBI" id="CHEBI:57919"/>
    </ligand>
</feature>
<feature type="binding site" evidence="1">
    <location>
        <position position="142"/>
    </location>
    <ligand>
        <name>4-CDP-2-C-methyl-D-erythritol 2-phosphate</name>
        <dbReference type="ChEBI" id="CHEBI:57919"/>
    </ligand>
</feature>
<feature type="site" description="Transition state stabilizer" evidence="1">
    <location>
        <position position="34"/>
    </location>
</feature>
<feature type="site" description="Transition state stabilizer" evidence="1">
    <location>
        <position position="133"/>
    </location>
</feature>
<gene>
    <name evidence="1" type="primary">ispF</name>
    <name type="ordered locus">Sde_1248</name>
</gene>
<comment type="function">
    <text evidence="1">Involved in the biosynthesis of isopentenyl diphosphate (IPP) and dimethylallyl diphosphate (DMAPP), two major building blocks of isoprenoid compounds. Catalyzes the conversion of 4-diphosphocytidyl-2-C-methyl-D-erythritol 2-phosphate (CDP-ME2P) to 2-C-methyl-D-erythritol 2,4-cyclodiphosphate (ME-CPP) with a corresponding release of cytidine 5-monophosphate (CMP).</text>
</comment>
<comment type="catalytic activity">
    <reaction evidence="1">
        <text>4-CDP-2-C-methyl-D-erythritol 2-phosphate = 2-C-methyl-D-erythritol 2,4-cyclic diphosphate + CMP</text>
        <dbReference type="Rhea" id="RHEA:23864"/>
        <dbReference type="ChEBI" id="CHEBI:57919"/>
        <dbReference type="ChEBI" id="CHEBI:58483"/>
        <dbReference type="ChEBI" id="CHEBI:60377"/>
        <dbReference type="EC" id="4.6.1.12"/>
    </reaction>
</comment>
<comment type="cofactor">
    <cofactor evidence="1">
        <name>a divalent metal cation</name>
        <dbReference type="ChEBI" id="CHEBI:60240"/>
    </cofactor>
    <text evidence="1">Binds 1 divalent metal cation per subunit.</text>
</comment>
<comment type="pathway">
    <text evidence="1">Isoprenoid biosynthesis; isopentenyl diphosphate biosynthesis via DXP pathway; isopentenyl diphosphate from 1-deoxy-D-xylulose 5-phosphate: step 4/6.</text>
</comment>
<comment type="subunit">
    <text evidence="1">Homotrimer.</text>
</comment>
<comment type="similarity">
    <text evidence="1">Belongs to the IspF family.</text>
</comment>
<dbReference type="EC" id="4.6.1.12" evidence="1"/>
<dbReference type="EMBL" id="CP000282">
    <property type="protein sequence ID" value="ABD80510.1"/>
    <property type="molecule type" value="Genomic_DNA"/>
</dbReference>
<dbReference type="RefSeq" id="WP_011467730.1">
    <property type="nucleotide sequence ID" value="NC_007912.1"/>
</dbReference>
<dbReference type="SMR" id="Q21LB9"/>
<dbReference type="STRING" id="203122.Sde_1248"/>
<dbReference type="GeneID" id="98612925"/>
<dbReference type="KEGG" id="sde:Sde_1248"/>
<dbReference type="eggNOG" id="COG0245">
    <property type="taxonomic scope" value="Bacteria"/>
</dbReference>
<dbReference type="HOGENOM" id="CLU_084630_2_0_6"/>
<dbReference type="OrthoDB" id="9804336at2"/>
<dbReference type="UniPathway" id="UPA00056">
    <property type="reaction ID" value="UER00095"/>
</dbReference>
<dbReference type="Proteomes" id="UP000001947">
    <property type="component" value="Chromosome"/>
</dbReference>
<dbReference type="GO" id="GO:0008685">
    <property type="term" value="F:2-C-methyl-D-erythritol 2,4-cyclodiphosphate synthase activity"/>
    <property type="evidence" value="ECO:0007669"/>
    <property type="project" value="UniProtKB-UniRule"/>
</dbReference>
<dbReference type="GO" id="GO:0046872">
    <property type="term" value="F:metal ion binding"/>
    <property type="evidence" value="ECO:0007669"/>
    <property type="project" value="UniProtKB-KW"/>
</dbReference>
<dbReference type="GO" id="GO:0019288">
    <property type="term" value="P:isopentenyl diphosphate biosynthetic process, methylerythritol 4-phosphate pathway"/>
    <property type="evidence" value="ECO:0007669"/>
    <property type="project" value="UniProtKB-UniRule"/>
</dbReference>
<dbReference type="GO" id="GO:0016114">
    <property type="term" value="P:terpenoid biosynthetic process"/>
    <property type="evidence" value="ECO:0007669"/>
    <property type="project" value="InterPro"/>
</dbReference>
<dbReference type="CDD" id="cd00554">
    <property type="entry name" value="MECDP_synthase"/>
    <property type="match status" value="1"/>
</dbReference>
<dbReference type="FunFam" id="3.30.1330.50:FF:000001">
    <property type="entry name" value="2-C-methyl-D-erythritol 2,4-cyclodiphosphate synthase"/>
    <property type="match status" value="1"/>
</dbReference>
<dbReference type="Gene3D" id="3.30.1330.50">
    <property type="entry name" value="2-C-methyl-D-erythritol 2,4-cyclodiphosphate synthase"/>
    <property type="match status" value="1"/>
</dbReference>
<dbReference type="HAMAP" id="MF_00107">
    <property type="entry name" value="IspF"/>
    <property type="match status" value="1"/>
</dbReference>
<dbReference type="InterPro" id="IPR003526">
    <property type="entry name" value="MECDP_synthase"/>
</dbReference>
<dbReference type="InterPro" id="IPR020555">
    <property type="entry name" value="MECDP_synthase_CS"/>
</dbReference>
<dbReference type="InterPro" id="IPR036571">
    <property type="entry name" value="MECDP_synthase_sf"/>
</dbReference>
<dbReference type="NCBIfam" id="TIGR00151">
    <property type="entry name" value="ispF"/>
    <property type="match status" value="1"/>
</dbReference>
<dbReference type="PANTHER" id="PTHR43181">
    <property type="entry name" value="2-C-METHYL-D-ERYTHRITOL 2,4-CYCLODIPHOSPHATE SYNTHASE, CHLOROPLASTIC"/>
    <property type="match status" value="1"/>
</dbReference>
<dbReference type="PANTHER" id="PTHR43181:SF1">
    <property type="entry name" value="2-C-METHYL-D-ERYTHRITOL 2,4-CYCLODIPHOSPHATE SYNTHASE, CHLOROPLASTIC"/>
    <property type="match status" value="1"/>
</dbReference>
<dbReference type="Pfam" id="PF02542">
    <property type="entry name" value="YgbB"/>
    <property type="match status" value="1"/>
</dbReference>
<dbReference type="SUPFAM" id="SSF69765">
    <property type="entry name" value="IpsF-like"/>
    <property type="match status" value="1"/>
</dbReference>
<dbReference type="PROSITE" id="PS01350">
    <property type="entry name" value="ISPF"/>
    <property type="match status" value="1"/>
</dbReference>
<sequence length="155" mass="16499">MRIGQGVDVHAFGDGDKIVIGGVVIPYERGLVAHSDGDVLLHALCDALLGAAALGDIGKHFPDTDSAYKNACSRTLLRMVYSKLKAKGYSLVNADMTIVAQAPKMAPHISDMRAKIAEDLDTHIDNINVKATTTEQLGFNGRKEGITALATVLIK</sequence>
<reference key="1">
    <citation type="journal article" date="2008" name="PLoS Genet.">
        <title>Complete genome sequence of the complex carbohydrate-degrading marine bacterium, Saccharophagus degradans strain 2-40 T.</title>
        <authorList>
            <person name="Weiner R.M."/>
            <person name="Taylor L.E. II"/>
            <person name="Henrissat B."/>
            <person name="Hauser L."/>
            <person name="Land M."/>
            <person name="Coutinho P.M."/>
            <person name="Rancurel C."/>
            <person name="Saunders E.H."/>
            <person name="Longmire A.G."/>
            <person name="Zhang H."/>
            <person name="Bayer E.A."/>
            <person name="Gilbert H.J."/>
            <person name="Larimer F."/>
            <person name="Zhulin I.B."/>
            <person name="Ekborg N.A."/>
            <person name="Lamed R."/>
            <person name="Richardson P.M."/>
            <person name="Borovok I."/>
            <person name="Hutcheson S."/>
        </authorList>
    </citation>
    <scope>NUCLEOTIDE SEQUENCE [LARGE SCALE GENOMIC DNA]</scope>
    <source>
        <strain>2-40 / ATCC 43961 / DSM 17024</strain>
    </source>
</reference>
<keyword id="KW-0414">Isoprene biosynthesis</keyword>
<keyword id="KW-0456">Lyase</keyword>
<keyword id="KW-0479">Metal-binding</keyword>
<keyword id="KW-1185">Reference proteome</keyword>
<name>ISPF_SACD2</name>
<proteinExistence type="inferred from homology"/>
<organism>
    <name type="scientific">Saccharophagus degradans (strain 2-40 / ATCC 43961 / DSM 17024)</name>
    <dbReference type="NCBI Taxonomy" id="203122"/>
    <lineage>
        <taxon>Bacteria</taxon>
        <taxon>Pseudomonadati</taxon>
        <taxon>Pseudomonadota</taxon>
        <taxon>Gammaproteobacteria</taxon>
        <taxon>Cellvibrionales</taxon>
        <taxon>Cellvibrionaceae</taxon>
        <taxon>Saccharophagus</taxon>
    </lineage>
</organism>
<accession>Q21LB9</accession>